<protein>
    <recommendedName>
        <fullName>Nuclear distribution protein nudE homolog 1</fullName>
    </recommendedName>
</protein>
<sequence>MEDSEEHHFSSVEEETRYWKELAMKYKQCAENIQEELCEFQEGSREYEAELETQLQQTESRNRDLLSENNRLRIELESVKEKFEMQHSEWYRQVSALEDDLAQTKAIKDQLQKYIRELEQANDDLERAKRAAIMSLEDFEQRLNQAIERNAFLESELDEKENLLESVQRLKDEARDLRQELAVQQKQEKPKTPMRTSLETERTDTAVQASLSLPSTPSLHRAPNINIPTPATFRRGFEDSYCATPLTPAARISALNIMGDLLRKVGALESKLASCRNFVYDQSPDRTTVSMYMNRDALETRMSPHQPLCDTGLVKRLEFGTRPSSTPGPMSHPSQSVVKMLL</sequence>
<reference key="1">
    <citation type="journal article" date="2005" name="Genome Biol.">
        <title>Full-length cDNAs from chicken bursal lymphocytes to facilitate gene function analysis.</title>
        <authorList>
            <person name="Caldwell R.B."/>
            <person name="Kierzek A.M."/>
            <person name="Arakawa H."/>
            <person name="Bezzubov Y."/>
            <person name="Zaim J."/>
            <person name="Fiedler P."/>
            <person name="Kutter S."/>
            <person name="Blagodatski A."/>
            <person name="Kostovska D."/>
            <person name="Koter M."/>
            <person name="Plachy J."/>
            <person name="Carninci P."/>
            <person name="Hayashizaki Y."/>
            <person name="Buerstedde J.-M."/>
        </authorList>
    </citation>
    <scope>NUCLEOTIDE SEQUENCE [LARGE SCALE MRNA]</scope>
    <source>
        <strain>CB</strain>
        <tissue>Bursa of Fabricius</tissue>
    </source>
</reference>
<name>NDE1_CHICK</name>
<evidence type="ECO:0000250" key="1"/>
<evidence type="ECO:0000250" key="2">
    <source>
        <dbReference type="UniProtKB" id="Q9NXR1"/>
    </source>
</evidence>
<evidence type="ECO:0000255" key="3"/>
<evidence type="ECO:0000256" key="4">
    <source>
        <dbReference type="SAM" id="MobiDB-lite"/>
    </source>
</evidence>
<evidence type="ECO:0000305" key="5"/>
<accession>Q5ZMC9</accession>
<feature type="chain" id="PRO_0000240205" description="Nuclear distribution protein nudE homolog 1">
    <location>
        <begin position="1"/>
        <end position="342"/>
    </location>
</feature>
<feature type="region of interest" description="Interaction with PAFAH1B1" evidence="1">
    <location>
        <begin position="89"/>
        <end position="157"/>
    </location>
</feature>
<feature type="region of interest" description="Disordered" evidence="4">
    <location>
        <begin position="182"/>
        <end position="203"/>
    </location>
</feature>
<feature type="region of interest" description="Disordered" evidence="4">
    <location>
        <begin position="320"/>
        <end position="342"/>
    </location>
</feature>
<feature type="coiled-coil region" evidence="3">
    <location>
        <begin position="45"/>
        <end position="189"/>
    </location>
</feature>
<feature type="compositionally biased region" description="Polar residues" evidence="4">
    <location>
        <begin position="322"/>
        <end position="342"/>
    </location>
</feature>
<gene>
    <name type="primary">NDE1</name>
    <name type="ORF">RCJMB04_2i10</name>
</gene>
<dbReference type="EMBL" id="AJ719455">
    <property type="protein sequence ID" value="CAG31114.1"/>
    <property type="molecule type" value="mRNA"/>
</dbReference>
<dbReference type="RefSeq" id="NP_001006169.1">
    <property type="nucleotide sequence ID" value="NM_001006169.2"/>
</dbReference>
<dbReference type="RefSeq" id="XP_040503326.1">
    <property type="nucleotide sequence ID" value="XM_040647392.2"/>
</dbReference>
<dbReference type="RefSeq" id="XP_046756605.1">
    <property type="nucleotide sequence ID" value="XM_046900649.1"/>
</dbReference>
<dbReference type="RefSeq" id="XP_046756606.1">
    <property type="nucleotide sequence ID" value="XM_046900650.1"/>
</dbReference>
<dbReference type="RefSeq" id="XP_046756607.1">
    <property type="nucleotide sequence ID" value="XM_046900651.1"/>
</dbReference>
<dbReference type="RefSeq" id="XP_046756608.1">
    <property type="nucleotide sequence ID" value="XM_046900652.1"/>
</dbReference>
<dbReference type="RefSeq" id="XP_046783403.1">
    <property type="nucleotide sequence ID" value="XM_046927447.1"/>
</dbReference>
<dbReference type="RefSeq" id="XP_046783404.1">
    <property type="nucleotide sequence ID" value="XM_046927448.1"/>
</dbReference>
<dbReference type="RefSeq" id="XP_046783405.1">
    <property type="nucleotide sequence ID" value="XM_046927449.1"/>
</dbReference>
<dbReference type="RefSeq" id="XP_046783406.1">
    <property type="nucleotide sequence ID" value="XM_046927450.1"/>
</dbReference>
<dbReference type="RefSeq" id="XP_046783407.1">
    <property type="nucleotide sequence ID" value="XM_046927451.1"/>
</dbReference>
<dbReference type="SMR" id="Q5ZMC9"/>
<dbReference type="FunCoup" id="Q5ZMC9">
    <property type="interactions" value="1391"/>
</dbReference>
<dbReference type="STRING" id="9031.ENSGALP00000048047"/>
<dbReference type="GlyGen" id="Q5ZMC9">
    <property type="glycosylation" value="2 sites"/>
</dbReference>
<dbReference type="PaxDb" id="9031-ENSGALP00000010488"/>
<dbReference type="Ensembl" id="ENSGALT00010049815.1">
    <property type="protein sequence ID" value="ENSGALP00010029432.1"/>
    <property type="gene ID" value="ENSGALG00010020635.1"/>
</dbReference>
<dbReference type="GeneID" id="416597"/>
<dbReference type="KEGG" id="gga:416597"/>
<dbReference type="CTD" id="54820"/>
<dbReference type="VEuPathDB" id="HostDB:geneid_416597"/>
<dbReference type="eggNOG" id="KOG1853">
    <property type="taxonomic scope" value="Eukaryota"/>
</dbReference>
<dbReference type="GeneTree" id="ENSGT00390000000111"/>
<dbReference type="HOGENOM" id="CLU_057872_0_0_1"/>
<dbReference type="InParanoid" id="Q5ZMC9"/>
<dbReference type="OMA" id="MVEPTTH"/>
<dbReference type="OrthoDB" id="5877028at2759"/>
<dbReference type="PhylomeDB" id="Q5ZMC9"/>
<dbReference type="Reactome" id="R-GGA-141444">
    <property type="pathway name" value="Amplification of signal from unattached kinetochores via a MAD2 inhibitory signal"/>
</dbReference>
<dbReference type="Reactome" id="R-GGA-2467813">
    <property type="pathway name" value="Separation of Sister Chromatids"/>
</dbReference>
<dbReference type="Reactome" id="R-GGA-2500257">
    <property type="pathway name" value="Resolution of Sister Chromatid Cohesion"/>
</dbReference>
<dbReference type="Reactome" id="R-GGA-2565942">
    <property type="pathway name" value="Regulation of PLK1 Activity at G2/M Transition"/>
</dbReference>
<dbReference type="Reactome" id="R-GGA-380259">
    <property type="pathway name" value="Loss of Nlp from mitotic centrosomes"/>
</dbReference>
<dbReference type="Reactome" id="R-GGA-380270">
    <property type="pathway name" value="Recruitment of mitotic centrosome proteins and complexes"/>
</dbReference>
<dbReference type="Reactome" id="R-GGA-380284">
    <property type="pathway name" value="Loss of proteins required for interphase microtubule organization from the centrosome"/>
</dbReference>
<dbReference type="Reactome" id="R-GGA-380320">
    <property type="pathway name" value="Recruitment of NuMA to mitotic centrosomes"/>
</dbReference>
<dbReference type="Reactome" id="R-GGA-5620912">
    <property type="pathway name" value="Anchoring of the basal body to the plasma membrane"/>
</dbReference>
<dbReference type="Reactome" id="R-GGA-5663220">
    <property type="pathway name" value="RHO GTPases Activate Formins"/>
</dbReference>
<dbReference type="Reactome" id="R-GGA-8854518">
    <property type="pathway name" value="AURKA Activation by TPX2"/>
</dbReference>
<dbReference type="Reactome" id="R-GGA-9648025">
    <property type="pathway name" value="EML4 and NUDC in mitotic spindle formation"/>
</dbReference>
<dbReference type="PRO" id="PR:Q5ZMC9"/>
<dbReference type="Proteomes" id="UP000000539">
    <property type="component" value="Chromosome 14"/>
</dbReference>
<dbReference type="Bgee" id="ENSGALG00000032590">
    <property type="expression patterns" value="Expressed in testis and 13 other cell types or tissues"/>
</dbReference>
<dbReference type="GO" id="GO:0005813">
    <property type="term" value="C:centrosome"/>
    <property type="evidence" value="ECO:0000318"/>
    <property type="project" value="GO_Central"/>
</dbReference>
<dbReference type="GO" id="GO:0032154">
    <property type="term" value="C:cleavage furrow"/>
    <property type="evidence" value="ECO:0007669"/>
    <property type="project" value="UniProtKB-SubCell"/>
</dbReference>
<dbReference type="GO" id="GO:0030659">
    <property type="term" value="C:cytoplasmic vesicle membrane"/>
    <property type="evidence" value="ECO:0007669"/>
    <property type="project" value="UniProtKB-SubCell"/>
</dbReference>
<dbReference type="GO" id="GO:0005871">
    <property type="term" value="C:kinesin complex"/>
    <property type="evidence" value="ECO:0000318"/>
    <property type="project" value="GO_Central"/>
</dbReference>
<dbReference type="GO" id="GO:0000776">
    <property type="term" value="C:kinetochore"/>
    <property type="evidence" value="ECO:0000318"/>
    <property type="project" value="GO_Central"/>
</dbReference>
<dbReference type="GO" id="GO:0005874">
    <property type="term" value="C:microtubule"/>
    <property type="evidence" value="ECO:0007669"/>
    <property type="project" value="UniProtKB-KW"/>
</dbReference>
<dbReference type="GO" id="GO:0031616">
    <property type="term" value="C:spindle pole centrosome"/>
    <property type="evidence" value="ECO:0000250"/>
    <property type="project" value="UniProtKB"/>
</dbReference>
<dbReference type="GO" id="GO:0008017">
    <property type="term" value="F:microtubule binding"/>
    <property type="evidence" value="ECO:0000250"/>
    <property type="project" value="UniProtKB"/>
</dbReference>
<dbReference type="GO" id="GO:0051301">
    <property type="term" value="P:cell division"/>
    <property type="evidence" value="ECO:0007669"/>
    <property type="project" value="UniProtKB-KW"/>
</dbReference>
<dbReference type="GO" id="GO:0016477">
    <property type="term" value="P:cell migration"/>
    <property type="evidence" value="ECO:0000318"/>
    <property type="project" value="GO_Central"/>
</dbReference>
<dbReference type="GO" id="GO:0051298">
    <property type="term" value="P:centrosome duplication"/>
    <property type="evidence" value="ECO:0000250"/>
    <property type="project" value="UniProtKB"/>
</dbReference>
<dbReference type="GO" id="GO:0051642">
    <property type="term" value="P:centrosome localization"/>
    <property type="evidence" value="ECO:0000318"/>
    <property type="project" value="GO_Central"/>
</dbReference>
<dbReference type="GO" id="GO:0007059">
    <property type="term" value="P:chromosome segregation"/>
    <property type="evidence" value="ECO:0000318"/>
    <property type="project" value="GO_Central"/>
</dbReference>
<dbReference type="GO" id="GO:0051303">
    <property type="term" value="P:establishment of chromosome localization"/>
    <property type="evidence" value="ECO:0000318"/>
    <property type="project" value="GO_Central"/>
</dbReference>
<dbReference type="GO" id="GO:0000132">
    <property type="term" value="P:establishment of mitotic spindle orientation"/>
    <property type="evidence" value="ECO:0000318"/>
    <property type="project" value="GO_Central"/>
</dbReference>
<dbReference type="GO" id="GO:0007020">
    <property type="term" value="P:microtubule nucleation"/>
    <property type="evidence" value="ECO:0000318"/>
    <property type="project" value="GO_Central"/>
</dbReference>
<dbReference type="GO" id="GO:0007100">
    <property type="term" value="P:mitotic centrosome separation"/>
    <property type="evidence" value="ECO:0000318"/>
    <property type="project" value="GO_Central"/>
</dbReference>
<dbReference type="GO" id="GO:0047496">
    <property type="term" value="P:vesicle transport along microtubule"/>
    <property type="evidence" value="ECO:0000318"/>
    <property type="project" value="GO_Central"/>
</dbReference>
<dbReference type="Gene3D" id="6.10.250.1080">
    <property type="match status" value="1"/>
</dbReference>
<dbReference type="InterPro" id="IPR033494">
    <property type="entry name" value="NUDE"/>
</dbReference>
<dbReference type="InterPro" id="IPR006964">
    <property type="entry name" value="NUDE_dom"/>
</dbReference>
<dbReference type="PANTHER" id="PTHR10921">
    <property type="entry name" value="NUCLEAR DISTRIBUTION PROTEIN NUDE HOMOLOG 1"/>
    <property type="match status" value="1"/>
</dbReference>
<dbReference type="PANTHER" id="PTHR10921:SF2">
    <property type="entry name" value="NUCLEAR DISTRIBUTION PROTEIN NUDE HOMOLOG 1"/>
    <property type="match status" value="1"/>
</dbReference>
<dbReference type="Pfam" id="PF04880">
    <property type="entry name" value="NUDE_C"/>
    <property type="match status" value="1"/>
</dbReference>
<organism>
    <name type="scientific">Gallus gallus</name>
    <name type="common">Chicken</name>
    <dbReference type="NCBI Taxonomy" id="9031"/>
    <lineage>
        <taxon>Eukaryota</taxon>
        <taxon>Metazoa</taxon>
        <taxon>Chordata</taxon>
        <taxon>Craniata</taxon>
        <taxon>Vertebrata</taxon>
        <taxon>Euteleostomi</taxon>
        <taxon>Archelosauria</taxon>
        <taxon>Archosauria</taxon>
        <taxon>Dinosauria</taxon>
        <taxon>Saurischia</taxon>
        <taxon>Theropoda</taxon>
        <taxon>Coelurosauria</taxon>
        <taxon>Aves</taxon>
        <taxon>Neognathae</taxon>
        <taxon>Galloanserae</taxon>
        <taxon>Galliformes</taxon>
        <taxon>Phasianidae</taxon>
        <taxon>Phasianinae</taxon>
        <taxon>Gallus</taxon>
    </lineage>
</organism>
<proteinExistence type="evidence at transcript level"/>
<keyword id="KW-0131">Cell cycle</keyword>
<keyword id="KW-0132">Cell division</keyword>
<keyword id="KW-0137">Centromere</keyword>
<keyword id="KW-0158">Chromosome</keyword>
<keyword id="KW-0175">Coiled coil</keyword>
<keyword id="KW-0963">Cytoplasm</keyword>
<keyword id="KW-0968">Cytoplasmic vesicle</keyword>
<keyword id="KW-0206">Cytoskeleton</keyword>
<keyword id="KW-0995">Kinetochore</keyword>
<keyword id="KW-0472">Membrane</keyword>
<keyword id="KW-0493">Microtubule</keyword>
<keyword id="KW-0498">Mitosis</keyword>
<keyword id="KW-0597">Phosphoprotein</keyword>
<keyword id="KW-1185">Reference proteome</keyword>
<comment type="function">
    <text evidence="2">Required for centrosome duplication and formation and function of the mitotic spindle.</text>
</comment>
<comment type="subunit">
    <text evidence="1">Self-associates. Interacts with PAFAH1B1 (By similarity).</text>
</comment>
<comment type="subcellular location">
    <subcellularLocation>
        <location evidence="1">Cytoplasm</location>
        <location evidence="1">Cytoskeleton</location>
    </subcellularLocation>
    <subcellularLocation>
        <location evidence="1">Cytoplasm</location>
        <location evidence="1">Cytoskeleton</location>
        <location evidence="1">Microtubule organizing center</location>
        <location evidence="1">Centrosome</location>
    </subcellularLocation>
    <subcellularLocation>
        <location evidence="1">Cytoplasm</location>
        <location evidence="1">Cytoskeleton</location>
        <location evidence="1">Spindle</location>
    </subcellularLocation>
    <subcellularLocation>
        <location evidence="1">Chromosome</location>
        <location evidence="1">Centromere</location>
        <location evidence="1">Kinetochore</location>
    </subcellularLocation>
    <subcellularLocation>
        <location evidence="1">Cleavage furrow</location>
    </subcellularLocation>
    <subcellularLocation>
        <location evidence="2">Cytoplasmic vesicle membrane</location>
    </subcellularLocation>
    <text evidence="1">Localizes to the interphase centrosome and to the mitotic spindle.</text>
</comment>
<comment type="PTM">
    <text evidence="1">Phosphorylated in mitosis.</text>
</comment>
<comment type="similarity">
    <text evidence="5">Belongs to the nudE family.</text>
</comment>